<keyword id="KW-0002">3D-structure</keyword>
<keyword id="KW-0067">ATP-binding</keyword>
<keyword id="KW-0378">Hydrolase</keyword>
<keyword id="KW-0547">Nucleotide-binding</keyword>
<keyword id="KW-1185">Reference proteome</keyword>
<comment type="function">
    <text evidence="1 2">Catalyzes the cleavage of 5-oxoproline to form L-glutamate coupled to the hydrolysis of ATP to ADP and inorganic phosphate.</text>
</comment>
<comment type="catalytic activity">
    <reaction evidence="1 2">
        <text>5-oxo-L-proline + ATP + 2 H2O = L-glutamate + ADP + phosphate + H(+)</text>
        <dbReference type="Rhea" id="RHEA:10348"/>
        <dbReference type="ChEBI" id="CHEBI:15377"/>
        <dbReference type="ChEBI" id="CHEBI:15378"/>
        <dbReference type="ChEBI" id="CHEBI:29985"/>
        <dbReference type="ChEBI" id="CHEBI:30616"/>
        <dbReference type="ChEBI" id="CHEBI:43474"/>
        <dbReference type="ChEBI" id="CHEBI:58402"/>
        <dbReference type="ChEBI" id="CHEBI:456216"/>
        <dbReference type="EC" id="3.5.2.9"/>
    </reaction>
</comment>
<comment type="subunit">
    <text evidence="1">Forms a complex composed of PxpA, PxpB and PxpC.</text>
</comment>
<comment type="disruption phenotype">
    <text evidence="2">Deletion of the gene slows growth on minimal medium with ammonium as nitrogen source.</text>
</comment>
<comment type="similarity">
    <text evidence="1 4">Belongs to the LamB/PxpA family.</text>
</comment>
<name>PXPA_ECOLI</name>
<sequence length="244" mass="25800">MKIDLNADLGEGCASDAELLTLVSSANIACGFHAGDAQIMQACVREAIKNGVAIGAHPSFPDRENFGRSAMQLPPETVYAQTLYQIGALATIARAQGGVMRHVKPHGMLYNQAAKEAQLADAIARAVYACDPALILVGLAGSELIRAGKQYGLTTREEVFADRGYQADGSLVPRSQSGALIENEEQALAQTLEMVQHGRVKSITGEWATVAAQTVCLHGDGEHALAFARRLRSAFAEKGIVVAA</sequence>
<gene>
    <name evidence="1 3" type="primary">pxpA</name>
    <name type="synonym">ybgL</name>
    <name type="ordered locus">b0713</name>
    <name type="ordered locus">JW0703</name>
</gene>
<evidence type="ECO:0000255" key="1">
    <source>
        <dbReference type="HAMAP-Rule" id="MF_00691"/>
    </source>
</evidence>
<evidence type="ECO:0000269" key="2">
    <source>
    </source>
</evidence>
<evidence type="ECO:0000303" key="3">
    <source>
    </source>
</evidence>
<evidence type="ECO:0000305" key="4"/>
<evidence type="ECO:0007744" key="5">
    <source>
        <dbReference type="PDB" id="1XW8"/>
    </source>
</evidence>
<evidence type="ECO:0007829" key="6">
    <source>
        <dbReference type="PDB" id="1XW8"/>
    </source>
</evidence>
<organism>
    <name type="scientific">Escherichia coli (strain K12)</name>
    <dbReference type="NCBI Taxonomy" id="83333"/>
    <lineage>
        <taxon>Bacteria</taxon>
        <taxon>Pseudomonadati</taxon>
        <taxon>Pseudomonadota</taxon>
        <taxon>Gammaproteobacteria</taxon>
        <taxon>Enterobacterales</taxon>
        <taxon>Enterobacteriaceae</taxon>
        <taxon>Escherichia</taxon>
    </lineage>
</organism>
<reference key="1">
    <citation type="journal article" date="1996" name="DNA Res.">
        <title>A 718-kb DNA sequence of the Escherichia coli K-12 genome corresponding to the 12.7-28.0 min region on the linkage map.</title>
        <authorList>
            <person name="Oshima T."/>
            <person name="Aiba H."/>
            <person name="Baba T."/>
            <person name="Fujita K."/>
            <person name="Hayashi K."/>
            <person name="Honjo A."/>
            <person name="Ikemoto K."/>
            <person name="Inada T."/>
            <person name="Itoh T."/>
            <person name="Kajihara M."/>
            <person name="Kanai K."/>
            <person name="Kashimoto K."/>
            <person name="Kimura S."/>
            <person name="Kitagawa M."/>
            <person name="Makino K."/>
            <person name="Masuda S."/>
            <person name="Miki T."/>
            <person name="Mizobuchi K."/>
            <person name="Mori H."/>
            <person name="Motomura K."/>
            <person name="Nakamura Y."/>
            <person name="Nashimoto H."/>
            <person name="Nishio Y."/>
            <person name="Saito N."/>
            <person name="Sampei G."/>
            <person name="Seki Y."/>
            <person name="Tagami H."/>
            <person name="Takemoto K."/>
            <person name="Wada C."/>
            <person name="Yamamoto Y."/>
            <person name="Yano M."/>
            <person name="Horiuchi T."/>
        </authorList>
    </citation>
    <scope>NUCLEOTIDE SEQUENCE [LARGE SCALE GENOMIC DNA]</scope>
    <source>
        <strain>K12 / W3110 / ATCC 27325 / DSM 5911</strain>
    </source>
</reference>
<reference key="2">
    <citation type="journal article" date="1997" name="Science">
        <title>The complete genome sequence of Escherichia coli K-12.</title>
        <authorList>
            <person name="Blattner F.R."/>
            <person name="Plunkett G. III"/>
            <person name="Bloch C.A."/>
            <person name="Perna N.T."/>
            <person name="Burland V."/>
            <person name="Riley M."/>
            <person name="Collado-Vides J."/>
            <person name="Glasner J.D."/>
            <person name="Rode C.K."/>
            <person name="Mayhew G.F."/>
            <person name="Gregor J."/>
            <person name="Davis N.W."/>
            <person name="Kirkpatrick H.A."/>
            <person name="Goeden M.A."/>
            <person name="Rose D.J."/>
            <person name="Mau B."/>
            <person name="Shao Y."/>
        </authorList>
    </citation>
    <scope>NUCLEOTIDE SEQUENCE [LARGE SCALE GENOMIC DNA]</scope>
    <source>
        <strain>K12 / MG1655 / ATCC 47076</strain>
    </source>
</reference>
<reference key="3">
    <citation type="journal article" date="2006" name="Mol. Syst. Biol.">
        <title>Highly accurate genome sequences of Escherichia coli K-12 strains MG1655 and W3110.</title>
        <authorList>
            <person name="Hayashi K."/>
            <person name="Morooka N."/>
            <person name="Yamamoto Y."/>
            <person name="Fujita K."/>
            <person name="Isono K."/>
            <person name="Choi S."/>
            <person name="Ohtsubo E."/>
            <person name="Baba T."/>
            <person name="Wanner B.L."/>
            <person name="Mori H."/>
            <person name="Horiuchi T."/>
        </authorList>
    </citation>
    <scope>NUCLEOTIDE SEQUENCE [LARGE SCALE GENOMIC DNA]</scope>
    <source>
        <strain>K12 / W3110 / ATCC 27325 / DSM 5911</strain>
    </source>
</reference>
<reference key="4">
    <citation type="journal article" date="1999" name="Electrophoresis">
        <title>Enrichment of low abundance proteins of Escherichia coli by hydroxyapatite chromatography.</title>
        <authorList>
            <person name="Fountoulakis M."/>
            <person name="Takacs M.-F."/>
            <person name="Berndt P."/>
            <person name="Langen H."/>
            <person name="Takacs B."/>
        </authorList>
    </citation>
    <scope>IDENTIFICATION BY MASS SPECTROMETRY</scope>
    <source>
        <strain>B / BL21</strain>
    </source>
</reference>
<reference key="5">
    <citation type="journal article" date="2017" name="J. Biol. Chem.">
        <title>Discovery of a widespread prokaryotic 5-oxoprolinase that was hiding in plain sight.</title>
        <authorList>
            <person name="Niehaus T.D."/>
            <person name="Elbadawi-Sidhu M."/>
            <person name="de Crecy-Lagard V."/>
            <person name="Fiehn O."/>
            <person name="Hanson A.D."/>
        </authorList>
    </citation>
    <scope>FUNCTION</scope>
    <scope>CATALYTIC ACTIVITY</scope>
    <scope>DISRUPTION PHENOTYPE</scope>
</reference>
<reference evidence="5" key="6">
    <citation type="submission" date="2004-10" db="PDB data bank">
        <title>X-ray structure of putative lactam utilization protein YBGL. Northeast Structural Genomics Consortium target ET90.</title>
        <authorList>
            <person name="Kuzin A.P."/>
            <person name="Chen Y."/>
            <person name="Vorobiev S.M."/>
            <person name="Acton T.B."/>
            <person name="Ma L.-C."/>
            <person name="Xiao R."/>
            <person name="Montelione G.T."/>
            <person name="Hunt J.F."/>
            <person name="Tong L."/>
        </authorList>
    </citation>
    <scope>X-RAY CRYSTALLOGRAPHY (2.00 ANGSTROMS)</scope>
</reference>
<proteinExistence type="evidence at protein level"/>
<dbReference type="EC" id="3.5.2.9" evidence="1 2"/>
<dbReference type="EMBL" id="U00096">
    <property type="protein sequence ID" value="AAC73807.1"/>
    <property type="molecule type" value="Genomic_DNA"/>
</dbReference>
<dbReference type="EMBL" id="AP009048">
    <property type="protein sequence ID" value="BAA35377.1"/>
    <property type="molecule type" value="Genomic_DNA"/>
</dbReference>
<dbReference type="PIR" id="H64806">
    <property type="entry name" value="H64806"/>
</dbReference>
<dbReference type="RefSeq" id="NP_415241.1">
    <property type="nucleotide sequence ID" value="NC_000913.3"/>
</dbReference>
<dbReference type="RefSeq" id="WP_000687112.1">
    <property type="nucleotide sequence ID" value="NZ_SSZK01000033.1"/>
</dbReference>
<dbReference type="PDB" id="1XW8">
    <property type="method" value="X-ray"/>
    <property type="resolution" value="2.00 A"/>
    <property type="chains" value="A=1-244"/>
</dbReference>
<dbReference type="PDBsum" id="1XW8"/>
<dbReference type="SMR" id="P75746"/>
<dbReference type="BioGRID" id="4259933">
    <property type="interactions" value="109"/>
</dbReference>
<dbReference type="DIP" id="DIP-11398N"/>
<dbReference type="FunCoup" id="P75746">
    <property type="interactions" value="67"/>
</dbReference>
<dbReference type="IntAct" id="P75746">
    <property type="interactions" value="4"/>
</dbReference>
<dbReference type="STRING" id="511145.b0713"/>
<dbReference type="jPOST" id="P75746"/>
<dbReference type="PaxDb" id="511145-b0713"/>
<dbReference type="EnsemblBacteria" id="AAC73807">
    <property type="protein sequence ID" value="AAC73807"/>
    <property type="gene ID" value="b0713"/>
</dbReference>
<dbReference type="GeneID" id="945318"/>
<dbReference type="KEGG" id="ecj:JW0703"/>
<dbReference type="KEGG" id="eco:b0713"/>
<dbReference type="KEGG" id="ecoc:C3026_03565"/>
<dbReference type="PATRIC" id="fig|511145.12.peg.743"/>
<dbReference type="EchoBASE" id="EB3092"/>
<dbReference type="eggNOG" id="COG1540">
    <property type="taxonomic scope" value="Bacteria"/>
</dbReference>
<dbReference type="HOGENOM" id="CLU_069535_0_0_6"/>
<dbReference type="InParanoid" id="P75746"/>
<dbReference type="OMA" id="VCIHGDT"/>
<dbReference type="OrthoDB" id="9773478at2"/>
<dbReference type="PhylomeDB" id="P75746"/>
<dbReference type="BioCyc" id="EcoCyc:G6382-MONOMER"/>
<dbReference type="BioCyc" id="MetaCyc:G6382-MONOMER"/>
<dbReference type="EvolutionaryTrace" id="P75746"/>
<dbReference type="PRO" id="PR:P75746"/>
<dbReference type="Proteomes" id="UP000000625">
    <property type="component" value="Chromosome"/>
</dbReference>
<dbReference type="GO" id="GO:0017168">
    <property type="term" value="F:5-oxoprolinase (ATP-hydrolyzing) activity"/>
    <property type="evidence" value="ECO:0007669"/>
    <property type="project" value="UniProtKB-UniRule"/>
</dbReference>
<dbReference type="GO" id="GO:0005524">
    <property type="term" value="F:ATP binding"/>
    <property type="evidence" value="ECO:0007669"/>
    <property type="project" value="UniProtKB-UniRule"/>
</dbReference>
<dbReference type="GO" id="GO:0005975">
    <property type="term" value="P:carbohydrate metabolic process"/>
    <property type="evidence" value="ECO:0007669"/>
    <property type="project" value="InterPro"/>
</dbReference>
<dbReference type="CDD" id="cd10800">
    <property type="entry name" value="LamB_YcsF_YbgL_like"/>
    <property type="match status" value="1"/>
</dbReference>
<dbReference type="Gene3D" id="3.20.20.370">
    <property type="entry name" value="Glycoside hydrolase/deacetylase"/>
    <property type="match status" value="1"/>
</dbReference>
<dbReference type="HAMAP" id="MF_00691">
    <property type="entry name" value="PxpA"/>
    <property type="match status" value="1"/>
</dbReference>
<dbReference type="InterPro" id="IPR011330">
    <property type="entry name" value="Glyco_hydro/deAcase_b/a-brl"/>
</dbReference>
<dbReference type="InterPro" id="IPR005501">
    <property type="entry name" value="LamB/YcsF/PxpA-like"/>
</dbReference>
<dbReference type="NCBIfam" id="NF003812">
    <property type="entry name" value="PRK05406.1-1"/>
    <property type="match status" value="1"/>
</dbReference>
<dbReference type="NCBIfam" id="NF003814">
    <property type="entry name" value="PRK05406.1-3"/>
    <property type="match status" value="1"/>
</dbReference>
<dbReference type="NCBIfam" id="NF003815">
    <property type="entry name" value="PRK05406.1-4"/>
    <property type="match status" value="1"/>
</dbReference>
<dbReference type="NCBIfam" id="NF003816">
    <property type="entry name" value="PRK05406.1-5"/>
    <property type="match status" value="1"/>
</dbReference>
<dbReference type="PANTHER" id="PTHR30292:SF0">
    <property type="entry name" value="5-OXOPROLINASE SUBUNIT A"/>
    <property type="match status" value="1"/>
</dbReference>
<dbReference type="PANTHER" id="PTHR30292">
    <property type="entry name" value="UNCHARACTERIZED PROTEIN YBGL-RELATED"/>
    <property type="match status" value="1"/>
</dbReference>
<dbReference type="Pfam" id="PF03746">
    <property type="entry name" value="LamB_YcsF"/>
    <property type="match status" value="1"/>
</dbReference>
<dbReference type="SUPFAM" id="SSF88713">
    <property type="entry name" value="Glycoside hydrolase/deacetylase"/>
    <property type="match status" value="1"/>
</dbReference>
<accession>P75746</accession>
<protein>
    <recommendedName>
        <fullName evidence="1 4">5-oxoprolinase subunit A</fullName>
        <shortName evidence="1 4">5-OPase subunit A</shortName>
        <ecNumber evidence="1 2">3.5.2.9</ecNumber>
    </recommendedName>
    <alternativeName>
        <fullName evidence="1 4">5-oxoprolinase (ATP-hydrolyzing) subunit A</fullName>
    </alternativeName>
</protein>
<feature type="chain" id="PRO_0000185007" description="5-oxoprolinase subunit A">
    <location>
        <begin position="1"/>
        <end position="244"/>
    </location>
</feature>
<feature type="strand" evidence="6">
    <location>
        <begin position="3"/>
        <end position="12"/>
    </location>
</feature>
<feature type="helix" evidence="6">
    <location>
        <begin position="16"/>
        <end position="22"/>
    </location>
</feature>
<feature type="strand" evidence="6">
    <location>
        <begin position="24"/>
        <end position="29"/>
    </location>
</feature>
<feature type="strand" evidence="6">
    <location>
        <begin position="31"/>
        <end position="34"/>
    </location>
</feature>
<feature type="helix" evidence="6">
    <location>
        <begin position="37"/>
        <end position="50"/>
    </location>
</feature>
<feature type="strand" evidence="6">
    <location>
        <begin position="53"/>
        <end position="57"/>
    </location>
</feature>
<feature type="helix" evidence="6">
    <location>
        <begin position="75"/>
        <end position="95"/>
    </location>
</feature>
<feature type="strand" evidence="6">
    <location>
        <begin position="100"/>
        <end position="103"/>
    </location>
</feature>
<feature type="helix" evidence="6">
    <location>
        <begin position="107"/>
        <end position="113"/>
    </location>
</feature>
<feature type="helix" evidence="6">
    <location>
        <begin position="117"/>
        <end position="130"/>
    </location>
</feature>
<feature type="strand" evidence="6">
    <location>
        <begin position="135"/>
        <end position="139"/>
    </location>
</feature>
<feature type="helix" evidence="6">
    <location>
        <begin position="143"/>
        <end position="150"/>
    </location>
</feature>
<feature type="strand" evidence="6">
    <location>
        <begin position="155"/>
        <end position="159"/>
    </location>
</feature>
<feature type="strand" evidence="6">
    <location>
        <begin position="169"/>
        <end position="171"/>
    </location>
</feature>
<feature type="turn" evidence="6">
    <location>
        <begin position="174"/>
        <end position="176"/>
    </location>
</feature>
<feature type="helix" evidence="6">
    <location>
        <begin position="187"/>
        <end position="197"/>
    </location>
</feature>
<feature type="strand" evidence="6">
    <location>
        <begin position="198"/>
        <end position="201"/>
    </location>
</feature>
<feature type="strand" evidence="6">
    <location>
        <begin position="207"/>
        <end position="209"/>
    </location>
</feature>
<feature type="strand" evidence="6">
    <location>
        <begin position="214"/>
        <end position="216"/>
    </location>
</feature>
<feature type="helix" evidence="6">
    <location>
        <begin position="225"/>
        <end position="234"/>
    </location>
</feature>